<name>ALLA_BRUAB</name>
<evidence type="ECO:0000255" key="1">
    <source>
        <dbReference type="HAMAP-Rule" id="MF_00616"/>
    </source>
</evidence>
<sequence length="169" mass="19043">MQIETLTVEPLTKEAFAPFGDVIEVEGAQLRLINNGTTERYHDLARMEAAGTQTRVLINIFRGQSFAAPIDIMMMERHPFGSQAFIPLNGRPFLVVVAEDAGAGPARPRAFLARGDQGVNYLRNIWHHPLLALEQKSDFLVVDRAGREDNLEEYFFSDYAYRIETTQTA</sequence>
<comment type="function">
    <text evidence="1">Catalyzes the catabolism of the allantoin degradation intermediate (S)-ureidoglycolate, generating urea and glyoxylate. Involved in the utilization of allantoin as nitrogen source.</text>
</comment>
<comment type="catalytic activity">
    <reaction evidence="1">
        <text>(S)-ureidoglycolate = urea + glyoxylate</text>
        <dbReference type="Rhea" id="RHEA:11304"/>
        <dbReference type="ChEBI" id="CHEBI:16199"/>
        <dbReference type="ChEBI" id="CHEBI:36655"/>
        <dbReference type="ChEBI" id="CHEBI:57296"/>
        <dbReference type="EC" id="4.3.2.3"/>
    </reaction>
</comment>
<comment type="cofactor">
    <cofactor evidence="1">
        <name>Ni(2+)</name>
        <dbReference type="ChEBI" id="CHEBI:49786"/>
    </cofactor>
</comment>
<comment type="pathway">
    <text evidence="1">Nitrogen metabolism; (S)-allantoin degradation.</text>
</comment>
<comment type="subunit">
    <text evidence="1">Homodimer.</text>
</comment>
<comment type="similarity">
    <text evidence="1">Belongs to the ureidoglycolate lyase family.</text>
</comment>
<organism>
    <name type="scientific">Brucella abortus biovar 1 (strain 9-941)</name>
    <dbReference type="NCBI Taxonomy" id="262698"/>
    <lineage>
        <taxon>Bacteria</taxon>
        <taxon>Pseudomonadati</taxon>
        <taxon>Pseudomonadota</taxon>
        <taxon>Alphaproteobacteria</taxon>
        <taxon>Hyphomicrobiales</taxon>
        <taxon>Brucellaceae</taxon>
        <taxon>Brucella/Ochrobactrum group</taxon>
        <taxon>Brucella</taxon>
    </lineage>
</organism>
<keyword id="KW-0456">Lyase</keyword>
<keyword id="KW-0659">Purine metabolism</keyword>
<proteinExistence type="inferred from homology"/>
<reference key="1">
    <citation type="journal article" date="2005" name="J. Bacteriol.">
        <title>Completion of the genome sequence of Brucella abortus and comparison to the highly similar genomes of Brucella melitensis and Brucella suis.</title>
        <authorList>
            <person name="Halling S.M."/>
            <person name="Peterson-Burch B.D."/>
            <person name="Bricker B.J."/>
            <person name="Zuerner R.L."/>
            <person name="Qing Z."/>
            <person name="Li L.-L."/>
            <person name="Kapur V."/>
            <person name="Alt D.P."/>
            <person name="Olsen S.C."/>
        </authorList>
    </citation>
    <scope>NUCLEOTIDE SEQUENCE [LARGE SCALE GENOMIC DNA]</scope>
    <source>
        <strain>9-941</strain>
    </source>
</reference>
<dbReference type="EC" id="4.3.2.3" evidence="1"/>
<dbReference type="EMBL" id="AE017223">
    <property type="protein sequence ID" value="AAX73918.1"/>
    <property type="molecule type" value="Genomic_DNA"/>
</dbReference>
<dbReference type="RefSeq" id="WP_002963665.1">
    <property type="nucleotide sequence ID" value="NC_006932.1"/>
</dbReference>
<dbReference type="SMR" id="Q57EL6"/>
<dbReference type="EnsemblBacteria" id="AAX73918">
    <property type="protein sequence ID" value="AAX73918"/>
    <property type="gene ID" value="BruAb1_0529"/>
</dbReference>
<dbReference type="KEGG" id="bmb:BruAb1_0529"/>
<dbReference type="HOGENOM" id="CLU_070848_1_0_5"/>
<dbReference type="UniPathway" id="UPA00395"/>
<dbReference type="Proteomes" id="UP000000540">
    <property type="component" value="Chromosome I"/>
</dbReference>
<dbReference type="GO" id="GO:0004848">
    <property type="term" value="F:ureidoglycolate hydrolase activity"/>
    <property type="evidence" value="ECO:0007669"/>
    <property type="project" value="InterPro"/>
</dbReference>
<dbReference type="GO" id="GO:0050385">
    <property type="term" value="F:ureidoglycolate lyase activity"/>
    <property type="evidence" value="ECO:0007669"/>
    <property type="project" value="UniProtKB-UniRule"/>
</dbReference>
<dbReference type="GO" id="GO:0000256">
    <property type="term" value="P:allantoin catabolic process"/>
    <property type="evidence" value="ECO:0007669"/>
    <property type="project" value="UniProtKB-UniRule"/>
</dbReference>
<dbReference type="GO" id="GO:0006145">
    <property type="term" value="P:purine nucleobase catabolic process"/>
    <property type="evidence" value="ECO:0007669"/>
    <property type="project" value="UniProtKB-UniRule"/>
</dbReference>
<dbReference type="CDD" id="cd20298">
    <property type="entry name" value="cupin_UAH"/>
    <property type="match status" value="1"/>
</dbReference>
<dbReference type="Gene3D" id="2.60.120.480">
    <property type="entry name" value="Ureidoglycolate hydrolase"/>
    <property type="match status" value="1"/>
</dbReference>
<dbReference type="HAMAP" id="MF_00616">
    <property type="entry name" value="Ureidogly_lyase"/>
    <property type="match status" value="1"/>
</dbReference>
<dbReference type="InterPro" id="IPR011051">
    <property type="entry name" value="RmlC_Cupin_sf"/>
</dbReference>
<dbReference type="InterPro" id="IPR047233">
    <property type="entry name" value="UAH_cupin"/>
</dbReference>
<dbReference type="InterPro" id="IPR007247">
    <property type="entry name" value="Ureidogly_lyase"/>
</dbReference>
<dbReference type="InterPro" id="IPR023525">
    <property type="entry name" value="Ureidogly_lyase_bac"/>
</dbReference>
<dbReference type="InterPro" id="IPR024060">
    <property type="entry name" value="Ureidoglycolate_lyase_dom_sf"/>
</dbReference>
<dbReference type="NCBIfam" id="NF002953">
    <property type="entry name" value="PRK03606.2-4"/>
    <property type="match status" value="1"/>
</dbReference>
<dbReference type="NCBIfam" id="NF009932">
    <property type="entry name" value="PRK13395.1"/>
    <property type="match status" value="1"/>
</dbReference>
<dbReference type="PANTHER" id="PTHR21221">
    <property type="entry name" value="UREIDOGLYCOLATE HYDROLASE"/>
    <property type="match status" value="1"/>
</dbReference>
<dbReference type="PANTHER" id="PTHR21221:SF1">
    <property type="entry name" value="UREIDOGLYCOLATE LYASE"/>
    <property type="match status" value="1"/>
</dbReference>
<dbReference type="Pfam" id="PF04115">
    <property type="entry name" value="Ureidogly_lyase"/>
    <property type="match status" value="1"/>
</dbReference>
<dbReference type="PIRSF" id="PIRSF017306">
    <property type="entry name" value="Ureidogly_hydro"/>
    <property type="match status" value="1"/>
</dbReference>
<dbReference type="SUPFAM" id="SSF51182">
    <property type="entry name" value="RmlC-like cupins"/>
    <property type="match status" value="1"/>
</dbReference>
<gene>
    <name evidence="1" type="primary">allA</name>
    <name type="ordered locus">BruAb1_0529</name>
</gene>
<feature type="chain" id="PRO_1000061345" description="Ureidoglycolate lyase">
    <location>
        <begin position="1"/>
        <end position="169"/>
    </location>
</feature>
<protein>
    <recommendedName>
        <fullName evidence="1">Ureidoglycolate lyase</fullName>
        <ecNumber evidence="1">4.3.2.3</ecNumber>
    </recommendedName>
    <alternativeName>
        <fullName evidence="1">Ureidoglycolatase</fullName>
    </alternativeName>
</protein>
<accession>Q57EL6</accession>